<keyword id="KW-0342">GTP-binding</keyword>
<keyword id="KW-0378">Hydrolase</keyword>
<keyword id="KW-0479">Metal-binding</keyword>
<keyword id="KW-0547">Nucleotide-binding</keyword>
<keyword id="KW-0554">One-carbon metabolism</keyword>
<keyword id="KW-0862">Zinc</keyword>
<feature type="chain" id="PRO_1000043722" description="GTP cyclohydrolase 1">
    <location>
        <begin position="1"/>
        <end position="229"/>
    </location>
</feature>
<feature type="region of interest" description="Disordered" evidence="3">
    <location>
        <begin position="1"/>
        <end position="26"/>
    </location>
</feature>
<feature type="binding site" evidence="2">
    <location>
        <position position="118"/>
    </location>
    <ligand>
        <name>Zn(2+)</name>
        <dbReference type="ChEBI" id="CHEBI:29105"/>
    </ligand>
</feature>
<feature type="binding site" evidence="2">
    <location>
        <position position="121"/>
    </location>
    <ligand>
        <name>Zn(2+)</name>
        <dbReference type="ChEBI" id="CHEBI:29105"/>
    </ligand>
</feature>
<feature type="binding site" evidence="2">
    <location>
        <position position="189"/>
    </location>
    <ligand>
        <name>Zn(2+)</name>
        <dbReference type="ChEBI" id="CHEBI:29105"/>
    </ligand>
</feature>
<evidence type="ECO:0000250" key="1"/>
<evidence type="ECO:0000255" key="2">
    <source>
        <dbReference type="HAMAP-Rule" id="MF_00223"/>
    </source>
</evidence>
<evidence type="ECO:0000256" key="3">
    <source>
        <dbReference type="SAM" id="MobiDB-lite"/>
    </source>
</evidence>
<gene>
    <name evidence="2" type="primary">folE</name>
    <name type="ordered locus">RPD_3248</name>
</gene>
<sequence>MDAKIKPLRGGKPADARPEFQPAELDPSEFLAAAVQPDQPRPSRTEAEQAVKTLLAYIGENTGREGLLDTPRRVVEAYDELFQGYHQCPAEVLDRTFGETAGYDDFVLVRDIGFTSHCEHHVMPFYGKAHIAYTPVERVVGLSKLARLVEIFARRLQTQEHLTAQIAAAIDEVLKPRGVAVMIEAEHTCMSVRGIGKQGASTFTSRYTGMFRDNPAEQARFMSMIRSRG</sequence>
<proteinExistence type="inferred from homology"/>
<dbReference type="EC" id="3.5.4.16" evidence="2"/>
<dbReference type="EMBL" id="CP000283">
    <property type="protein sequence ID" value="ABE40472.1"/>
    <property type="molecule type" value="Genomic_DNA"/>
</dbReference>
<dbReference type="SMR" id="Q134L7"/>
<dbReference type="STRING" id="316057.RPD_3248"/>
<dbReference type="KEGG" id="rpd:RPD_3248"/>
<dbReference type="eggNOG" id="COG0302">
    <property type="taxonomic scope" value="Bacteria"/>
</dbReference>
<dbReference type="HOGENOM" id="CLU_049768_3_1_5"/>
<dbReference type="BioCyc" id="RPAL316057:RPD_RS16315-MONOMER"/>
<dbReference type="UniPathway" id="UPA00848">
    <property type="reaction ID" value="UER00151"/>
</dbReference>
<dbReference type="Proteomes" id="UP000001818">
    <property type="component" value="Chromosome"/>
</dbReference>
<dbReference type="GO" id="GO:0005737">
    <property type="term" value="C:cytoplasm"/>
    <property type="evidence" value="ECO:0007669"/>
    <property type="project" value="TreeGrafter"/>
</dbReference>
<dbReference type="GO" id="GO:0005525">
    <property type="term" value="F:GTP binding"/>
    <property type="evidence" value="ECO:0007669"/>
    <property type="project" value="UniProtKB-KW"/>
</dbReference>
<dbReference type="GO" id="GO:0003934">
    <property type="term" value="F:GTP cyclohydrolase I activity"/>
    <property type="evidence" value="ECO:0007669"/>
    <property type="project" value="UniProtKB-UniRule"/>
</dbReference>
<dbReference type="GO" id="GO:0008270">
    <property type="term" value="F:zinc ion binding"/>
    <property type="evidence" value="ECO:0007669"/>
    <property type="project" value="UniProtKB-UniRule"/>
</dbReference>
<dbReference type="GO" id="GO:0006730">
    <property type="term" value="P:one-carbon metabolic process"/>
    <property type="evidence" value="ECO:0007669"/>
    <property type="project" value="UniProtKB-UniRule"/>
</dbReference>
<dbReference type="GO" id="GO:0006729">
    <property type="term" value="P:tetrahydrobiopterin biosynthetic process"/>
    <property type="evidence" value="ECO:0007669"/>
    <property type="project" value="TreeGrafter"/>
</dbReference>
<dbReference type="GO" id="GO:0046654">
    <property type="term" value="P:tetrahydrofolate biosynthetic process"/>
    <property type="evidence" value="ECO:0007669"/>
    <property type="project" value="UniProtKB-UniRule"/>
</dbReference>
<dbReference type="FunFam" id="1.10.286.10:FF:000001">
    <property type="entry name" value="GTP cyclohydrolase 1"/>
    <property type="match status" value="1"/>
</dbReference>
<dbReference type="FunFam" id="3.30.1130.10:FF:000001">
    <property type="entry name" value="GTP cyclohydrolase 1"/>
    <property type="match status" value="1"/>
</dbReference>
<dbReference type="Gene3D" id="1.10.286.10">
    <property type="match status" value="1"/>
</dbReference>
<dbReference type="Gene3D" id="3.30.1130.10">
    <property type="match status" value="1"/>
</dbReference>
<dbReference type="HAMAP" id="MF_00223">
    <property type="entry name" value="FolE"/>
    <property type="match status" value="1"/>
</dbReference>
<dbReference type="InterPro" id="IPR043133">
    <property type="entry name" value="GTP-CH-I_C/QueF"/>
</dbReference>
<dbReference type="InterPro" id="IPR043134">
    <property type="entry name" value="GTP-CH-I_N"/>
</dbReference>
<dbReference type="InterPro" id="IPR001474">
    <property type="entry name" value="GTP_CycHdrlase_I"/>
</dbReference>
<dbReference type="InterPro" id="IPR018234">
    <property type="entry name" value="GTP_CycHdrlase_I_CS"/>
</dbReference>
<dbReference type="InterPro" id="IPR020602">
    <property type="entry name" value="GTP_CycHdrlase_I_dom"/>
</dbReference>
<dbReference type="NCBIfam" id="TIGR00063">
    <property type="entry name" value="folE"/>
    <property type="match status" value="1"/>
</dbReference>
<dbReference type="NCBIfam" id="NF006825">
    <property type="entry name" value="PRK09347.1-2"/>
    <property type="match status" value="1"/>
</dbReference>
<dbReference type="NCBIfam" id="NF006826">
    <property type="entry name" value="PRK09347.1-3"/>
    <property type="match status" value="1"/>
</dbReference>
<dbReference type="PANTHER" id="PTHR11109:SF7">
    <property type="entry name" value="GTP CYCLOHYDROLASE 1"/>
    <property type="match status" value="1"/>
</dbReference>
<dbReference type="PANTHER" id="PTHR11109">
    <property type="entry name" value="GTP CYCLOHYDROLASE I"/>
    <property type="match status" value="1"/>
</dbReference>
<dbReference type="Pfam" id="PF01227">
    <property type="entry name" value="GTP_cyclohydroI"/>
    <property type="match status" value="1"/>
</dbReference>
<dbReference type="SUPFAM" id="SSF55620">
    <property type="entry name" value="Tetrahydrobiopterin biosynthesis enzymes-like"/>
    <property type="match status" value="1"/>
</dbReference>
<dbReference type="PROSITE" id="PS00859">
    <property type="entry name" value="GTP_CYCLOHYDROL_1_1"/>
    <property type="match status" value="1"/>
</dbReference>
<organism>
    <name type="scientific">Rhodopseudomonas palustris (strain BisB5)</name>
    <dbReference type="NCBI Taxonomy" id="316057"/>
    <lineage>
        <taxon>Bacteria</taxon>
        <taxon>Pseudomonadati</taxon>
        <taxon>Pseudomonadota</taxon>
        <taxon>Alphaproteobacteria</taxon>
        <taxon>Hyphomicrobiales</taxon>
        <taxon>Nitrobacteraceae</taxon>
        <taxon>Rhodopseudomonas</taxon>
    </lineage>
</organism>
<name>GCH1_RHOPS</name>
<reference key="1">
    <citation type="submission" date="2006-03" db="EMBL/GenBank/DDBJ databases">
        <title>Complete sequence of Rhodopseudomonas palustris BisB5.</title>
        <authorList>
            <consortium name="US DOE Joint Genome Institute"/>
            <person name="Copeland A."/>
            <person name="Lucas S."/>
            <person name="Lapidus A."/>
            <person name="Barry K."/>
            <person name="Detter J.C."/>
            <person name="Glavina del Rio T."/>
            <person name="Hammon N."/>
            <person name="Israni S."/>
            <person name="Dalin E."/>
            <person name="Tice H."/>
            <person name="Pitluck S."/>
            <person name="Chain P."/>
            <person name="Malfatti S."/>
            <person name="Shin M."/>
            <person name="Vergez L."/>
            <person name="Schmutz J."/>
            <person name="Larimer F."/>
            <person name="Land M."/>
            <person name="Hauser L."/>
            <person name="Pelletier D.A."/>
            <person name="Kyrpides N."/>
            <person name="Lykidis A."/>
            <person name="Oda Y."/>
            <person name="Harwood C.S."/>
            <person name="Richardson P."/>
        </authorList>
    </citation>
    <scope>NUCLEOTIDE SEQUENCE [LARGE SCALE GENOMIC DNA]</scope>
    <source>
        <strain>BisB5</strain>
    </source>
</reference>
<protein>
    <recommendedName>
        <fullName evidence="2">GTP cyclohydrolase 1</fullName>
        <ecNumber evidence="2">3.5.4.16</ecNumber>
    </recommendedName>
    <alternativeName>
        <fullName evidence="2">GTP cyclohydrolase I</fullName>
        <shortName evidence="2">GTP-CH-I</shortName>
    </alternativeName>
</protein>
<accession>Q134L7</accession>
<comment type="catalytic activity">
    <reaction evidence="2">
        <text>GTP + H2O = 7,8-dihydroneopterin 3'-triphosphate + formate + H(+)</text>
        <dbReference type="Rhea" id="RHEA:17473"/>
        <dbReference type="ChEBI" id="CHEBI:15377"/>
        <dbReference type="ChEBI" id="CHEBI:15378"/>
        <dbReference type="ChEBI" id="CHEBI:15740"/>
        <dbReference type="ChEBI" id="CHEBI:37565"/>
        <dbReference type="ChEBI" id="CHEBI:58462"/>
        <dbReference type="EC" id="3.5.4.16"/>
    </reaction>
</comment>
<comment type="pathway">
    <text evidence="2">Cofactor biosynthesis; 7,8-dihydroneopterin triphosphate biosynthesis; 7,8-dihydroneopterin triphosphate from GTP: step 1/1.</text>
</comment>
<comment type="subunit">
    <text evidence="1">Toroid-shaped homodecamer, composed of two pentamers of five dimers.</text>
</comment>
<comment type="similarity">
    <text evidence="2">Belongs to the GTP cyclohydrolase I family.</text>
</comment>